<proteinExistence type="evidence at protein level"/>
<evidence type="ECO:0000255" key="1">
    <source>
        <dbReference type="PROSITE-ProRule" id="PRU00048"/>
    </source>
</evidence>
<evidence type="ECO:0000256" key="2">
    <source>
        <dbReference type="SAM" id="MobiDB-lite"/>
    </source>
</evidence>
<evidence type="ECO:0000269" key="3">
    <source>
    </source>
</evidence>
<evidence type="ECO:0000305" key="4"/>
<reference key="1">
    <citation type="journal article" date="1990" name="Gene">
        <title>Cloning of usp45, a gene encoding a secreted protein from Lactococcus lactis subsp. lactis MG1363.</title>
        <authorList>
            <person name="van Asseldonk M."/>
            <person name="Rutten G."/>
            <person name="Oteman M."/>
            <person name="Siezen R.J."/>
            <person name="de Vos W.M."/>
            <person name="Simons G."/>
        </authorList>
    </citation>
    <scope>NUCLEOTIDE SEQUENCE [GENOMIC DNA]</scope>
    <scope>PROTEIN SEQUENCE OF 28-37</scope>
</reference>
<reference key="2">
    <citation type="journal article" date="2007" name="J. Bacteriol.">
        <title>The complete genome sequence of the lactic acid bacterial paradigm Lactococcus lactis subsp. cremoris MG1363.</title>
        <authorList>
            <person name="Wegmann U."/>
            <person name="O'Connell-Motherway M."/>
            <person name="Zomer A."/>
            <person name="Buist G."/>
            <person name="Shearman C."/>
            <person name="Canchaya C."/>
            <person name="Ventura M."/>
            <person name="Goesmann A."/>
            <person name="Gasson M.J."/>
            <person name="Kuipers O.P."/>
            <person name="van Sinderen D."/>
            <person name="Kok J."/>
        </authorList>
    </citation>
    <scope>NUCLEOTIDE SEQUENCE [LARGE SCALE GENOMIC DNA]</scope>
    <source>
        <strain>MG1363</strain>
    </source>
</reference>
<accession>P22865</accession>
<accession>A2RP24</accession>
<dbReference type="EMBL" id="M60178">
    <property type="protein sequence ID" value="AAA25230.1"/>
    <property type="molecule type" value="Genomic_DNA"/>
</dbReference>
<dbReference type="EMBL" id="AM406671">
    <property type="protein sequence ID" value="CAL99070.1"/>
    <property type="molecule type" value="Genomic_DNA"/>
</dbReference>
<dbReference type="RefSeq" id="WP_011836130.1">
    <property type="nucleotide sequence ID" value="NC_009004.1"/>
</dbReference>
<dbReference type="SMR" id="P22865"/>
<dbReference type="STRING" id="416870.llmg_2507"/>
<dbReference type="KEGG" id="llm:llmg_2507"/>
<dbReference type="eggNOG" id="COG3883">
    <property type="taxonomic scope" value="Bacteria"/>
</dbReference>
<dbReference type="eggNOG" id="COG3942">
    <property type="taxonomic scope" value="Bacteria"/>
</dbReference>
<dbReference type="HOGENOM" id="CLU_034085_2_2_9"/>
<dbReference type="OrthoDB" id="2409959at2"/>
<dbReference type="Proteomes" id="UP000000364">
    <property type="component" value="Chromosome"/>
</dbReference>
<dbReference type="GO" id="GO:0005737">
    <property type="term" value="C:cytoplasm"/>
    <property type="evidence" value="ECO:0007669"/>
    <property type="project" value="TreeGrafter"/>
</dbReference>
<dbReference type="GO" id="GO:0005856">
    <property type="term" value="C:cytoskeleton"/>
    <property type="evidence" value="ECO:0007669"/>
    <property type="project" value="TreeGrafter"/>
</dbReference>
<dbReference type="GO" id="GO:0004674">
    <property type="term" value="F:protein serine/threonine kinase activity"/>
    <property type="evidence" value="ECO:0007669"/>
    <property type="project" value="TreeGrafter"/>
</dbReference>
<dbReference type="GO" id="GO:0031032">
    <property type="term" value="P:actomyosin structure organization"/>
    <property type="evidence" value="ECO:0007669"/>
    <property type="project" value="TreeGrafter"/>
</dbReference>
<dbReference type="Gene3D" id="6.10.250.3150">
    <property type="match status" value="1"/>
</dbReference>
<dbReference type="Gene3D" id="3.90.1720.10">
    <property type="entry name" value="endopeptidase domain like (from Nostoc punctiforme)"/>
    <property type="match status" value="1"/>
</dbReference>
<dbReference type="InterPro" id="IPR007921">
    <property type="entry name" value="CHAP_dom"/>
</dbReference>
<dbReference type="InterPro" id="IPR038765">
    <property type="entry name" value="Papain-like_cys_pep_sf"/>
</dbReference>
<dbReference type="InterPro" id="IPR050839">
    <property type="entry name" value="Rho-assoc_Ser/Thr_Kinase"/>
</dbReference>
<dbReference type="PANTHER" id="PTHR22988:SF75">
    <property type="entry name" value="MYOSIN-16-LIKE"/>
    <property type="match status" value="1"/>
</dbReference>
<dbReference type="PANTHER" id="PTHR22988">
    <property type="entry name" value="MYOTONIC DYSTROPHY S/T KINASE-RELATED"/>
    <property type="match status" value="1"/>
</dbReference>
<dbReference type="Pfam" id="PF24568">
    <property type="entry name" value="CC_PcsB"/>
    <property type="match status" value="1"/>
</dbReference>
<dbReference type="Pfam" id="PF05257">
    <property type="entry name" value="CHAP"/>
    <property type="match status" value="1"/>
</dbReference>
<dbReference type="SUPFAM" id="SSF54001">
    <property type="entry name" value="Cysteine proteinases"/>
    <property type="match status" value="1"/>
</dbReference>
<dbReference type="PROSITE" id="PS50911">
    <property type="entry name" value="CHAP"/>
    <property type="match status" value="1"/>
</dbReference>
<organism>
    <name type="scientific">Lactococcus lactis subsp. cremoris (strain MG1363)</name>
    <dbReference type="NCBI Taxonomy" id="416870"/>
    <lineage>
        <taxon>Bacteria</taxon>
        <taxon>Bacillati</taxon>
        <taxon>Bacillota</taxon>
        <taxon>Bacilli</taxon>
        <taxon>Lactobacillales</taxon>
        <taxon>Streptococcaceae</taxon>
        <taxon>Lactococcus</taxon>
        <taxon>Lactococcus cremoris subsp. cremoris</taxon>
    </lineage>
</organism>
<gene>
    <name type="primary">usp45</name>
    <name type="ordered locus">llmg_2507</name>
</gene>
<sequence>MKKKIISAILMSTVILSAAAPLSGVYADTNSDIAKQDATISSAQSAKAQAQAQVDSLQSKVDSLQQKQTSTKAQIAKIESEAKALNAQIATLNESIKERTKTLEAQARSAQVNSSATNYMDAVVNSKSLTDVIQKVTAIATVSSANKQMLEQQEKEQKELSQKSETVKKNYNQFVSLSQSLDSQAQELTSQQAELKVATLNYQATIATAQDKKQALLDEKAAAEKAAQEAAKKQAAYEAQQKEAAQAQAASTAATAKAVEAATSSASASSSQAPQVSTSTDNTTSNASASNSSNSSSNSSSSSSSSSSSSSSSSNSNAGGNTNSGTSTGNTGGTTTGGSGINSSPIGNPYAGGGCTDYVWQYFAAQGIYIRNIMPGNGGQWASNGPAQGVLHVVGAAPGVIASSFSADFVGYANSPYGHVAIVKSVNSDGTITIKEGGYGTTWWGHERTVSASGVTFLMPN</sequence>
<protein>
    <recommendedName>
        <fullName>Secreted 45 kDa protein</fullName>
    </recommendedName>
</protein>
<keyword id="KW-0903">Direct protein sequencing</keyword>
<keyword id="KW-0732">Signal</keyword>
<name>USP45_LACLM</name>
<feature type="signal peptide" evidence="3">
    <location>
        <begin position="1"/>
        <end position="27"/>
    </location>
</feature>
<feature type="chain" id="PRO_0000022642" description="Secreted 45 kDa protein">
    <location>
        <begin position="28"/>
        <end position="461"/>
    </location>
</feature>
<feature type="domain" description="Peptidase C51" evidence="1">
    <location>
        <begin position="330"/>
        <end position="459"/>
    </location>
</feature>
<feature type="region of interest" description="Disordered" evidence="2">
    <location>
        <begin position="264"/>
        <end position="343"/>
    </location>
</feature>
<feature type="compositionally biased region" description="Low complexity" evidence="2">
    <location>
        <begin position="264"/>
        <end position="329"/>
    </location>
</feature>
<feature type="compositionally biased region" description="Gly residues" evidence="2">
    <location>
        <begin position="330"/>
        <end position="340"/>
    </location>
</feature>
<feature type="sequence conflict" description="In Ref. 1; AAA25230." evidence="4" ref="1">
    <original>A</original>
    <variation>L</variation>
    <location>
        <position position="82"/>
    </location>
</feature>
<feature type="sequence conflict" description="In Ref. 1; AAA25230." evidence="4" ref="1">
    <original>M</original>
    <variation>I</variation>
    <location>
        <position position="149"/>
    </location>
</feature>